<gene>
    <name type="primary">ccrM</name>
    <name type="ordered locus">BAbS19_I04800</name>
</gene>
<dbReference type="EC" id="2.1.1.72"/>
<dbReference type="EMBL" id="CP000887">
    <property type="protein sequence ID" value="ACD72015.1"/>
    <property type="molecule type" value="Genomic_DNA"/>
</dbReference>
<dbReference type="SMR" id="B2S9Y5"/>
<dbReference type="REBASE" id="154027">
    <property type="entry name" value="M.Ssp60837ORF2135P"/>
</dbReference>
<dbReference type="REBASE" id="177016">
    <property type="entry name" value="M.Mph27ORF311P"/>
</dbReference>
<dbReference type="REBASE" id="18251">
    <property type="entry name" value="M.BabS19ORF4800P"/>
</dbReference>
<dbReference type="REBASE" id="191859">
    <property type="entry name" value="M.Apa1447ORF264P"/>
</dbReference>
<dbReference type="REBASE" id="191877">
    <property type="entry name" value="M.Apa1342ORF3207P"/>
</dbReference>
<dbReference type="REBASE" id="191898">
    <property type="entry name" value="M.Apa1342ORF266P"/>
</dbReference>
<dbReference type="REBASE" id="191901">
    <property type="entry name" value="M.Apa1468ORF264P"/>
</dbReference>
<dbReference type="REBASE" id="203809">
    <property type="entry name" value="M.Keu1446ORF1486P"/>
</dbReference>
<dbReference type="REBASE" id="243307">
    <property type="entry name" value="M.Mmy2708ORF2734P"/>
</dbReference>
<dbReference type="KEGG" id="bmc:BAbS19_I04800"/>
<dbReference type="HOGENOM" id="CLU_024927_5_1_5"/>
<dbReference type="Proteomes" id="UP000002565">
    <property type="component" value="Chromosome 1"/>
</dbReference>
<dbReference type="GO" id="GO:0005737">
    <property type="term" value="C:cytoplasm"/>
    <property type="evidence" value="ECO:0007669"/>
    <property type="project" value="TreeGrafter"/>
</dbReference>
<dbReference type="GO" id="GO:0003677">
    <property type="term" value="F:DNA binding"/>
    <property type="evidence" value="ECO:0007669"/>
    <property type="project" value="UniProtKB-KW"/>
</dbReference>
<dbReference type="GO" id="GO:0008170">
    <property type="term" value="F:N-methyltransferase activity"/>
    <property type="evidence" value="ECO:0007669"/>
    <property type="project" value="InterPro"/>
</dbReference>
<dbReference type="GO" id="GO:0009007">
    <property type="term" value="F:site-specific DNA-methyltransferase (adenine-specific) activity"/>
    <property type="evidence" value="ECO:0007669"/>
    <property type="project" value="UniProtKB-EC"/>
</dbReference>
<dbReference type="GO" id="GO:0006260">
    <property type="term" value="P:DNA replication"/>
    <property type="evidence" value="ECO:0007669"/>
    <property type="project" value="UniProtKB-KW"/>
</dbReference>
<dbReference type="GO" id="GO:0032259">
    <property type="term" value="P:methylation"/>
    <property type="evidence" value="ECO:0007669"/>
    <property type="project" value="UniProtKB-KW"/>
</dbReference>
<dbReference type="FunFam" id="3.40.50.150:FF:000276">
    <property type="entry name" value="Methyltransferase"/>
    <property type="match status" value="1"/>
</dbReference>
<dbReference type="Gene3D" id="3.40.50.150">
    <property type="entry name" value="Vaccinia Virus protein VP39"/>
    <property type="match status" value="1"/>
</dbReference>
<dbReference type="InterPro" id="IPR002941">
    <property type="entry name" value="DNA_methylase_N4/N6"/>
</dbReference>
<dbReference type="InterPro" id="IPR002052">
    <property type="entry name" value="DNA_methylase_N6_adenine_CS"/>
</dbReference>
<dbReference type="InterPro" id="IPR040843">
    <property type="entry name" value="RAMA"/>
</dbReference>
<dbReference type="InterPro" id="IPR001091">
    <property type="entry name" value="RM_Methyltransferase"/>
</dbReference>
<dbReference type="InterPro" id="IPR029063">
    <property type="entry name" value="SAM-dependent_MTases_sf"/>
</dbReference>
<dbReference type="PANTHER" id="PTHR13370">
    <property type="entry name" value="RNA METHYLASE-RELATED"/>
    <property type="match status" value="1"/>
</dbReference>
<dbReference type="PANTHER" id="PTHR13370:SF3">
    <property type="entry name" value="TRNA (GUANINE(10)-N2)-METHYLTRANSFERASE HOMOLOG"/>
    <property type="match status" value="1"/>
</dbReference>
<dbReference type="Pfam" id="PF01555">
    <property type="entry name" value="N6_N4_Mtase"/>
    <property type="match status" value="1"/>
</dbReference>
<dbReference type="Pfam" id="PF18755">
    <property type="entry name" value="RAMA"/>
    <property type="match status" value="1"/>
</dbReference>
<dbReference type="PRINTS" id="PR00508">
    <property type="entry name" value="S21N4MTFRASE"/>
</dbReference>
<dbReference type="SUPFAM" id="SSF53335">
    <property type="entry name" value="S-adenosyl-L-methionine-dependent methyltransferases"/>
    <property type="match status" value="1"/>
</dbReference>
<dbReference type="PROSITE" id="PS00092">
    <property type="entry name" value="N6_MTASE"/>
    <property type="match status" value="1"/>
</dbReference>
<accession>B2S9Y5</accession>
<name>CCRM_BRUA1</name>
<sequence>MRSQVIEYPMSLVRLAHELPIEAPRTAWLDSIIKGDCVSALERLPDHSVDVIFADPPYNLQLGGDLHRPDQSMVSAVDDHWDQFESFQAYDAFTRAWLLACRRVLKPNGTIWVIGSYHNIFRVGTQLQDLGFWLLNDIVWRKTNPMPNFRGRRFQNAHETLIWASREQKGKGYTFNYEAMKAANDDVQMRSDWLFPICTGSERLKDENGDKVHPTQKPEALLARIMMASSKPGDVILDPFFGSGTTGAVAKRLGRHFVGIEREQPYIDAATARINAVEPLGKAELTVMTGKRAEPRVAFTSVMEAGLLRPGTVLCDERRRFAAIVRADGTLTANGEAGSIHRIGARVQGFDACNGWTFWHFEENGVLKPIDALRKIIREQMAAAGA</sequence>
<evidence type="ECO:0000250" key="1">
    <source>
        <dbReference type="UniProtKB" id="O30569"/>
    </source>
</evidence>
<evidence type="ECO:0000250" key="2">
    <source>
        <dbReference type="UniProtKB" id="Q2YMK2"/>
    </source>
</evidence>
<evidence type="ECO:0000255" key="3"/>
<evidence type="ECO:0000303" key="4">
    <source>
    </source>
</evidence>
<evidence type="ECO:0000305" key="5"/>
<keyword id="KW-0235">DNA replication</keyword>
<keyword id="KW-0238">DNA-binding</keyword>
<keyword id="KW-0489">Methyltransferase</keyword>
<keyword id="KW-0949">S-adenosyl-L-methionine</keyword>
<keyword id="KW-0808">Transferase</keyword>
<protein>
    <recommendedName>
        <fullName evidence="2">DNA methyltransferase CcrM</fullName>
        <shortName>M.CcrM</shortName>
        <ecNumber>2.1.1.72</ecNumber>
    </recommendedName>
    <alternativeName>
        <fullName>Adenine-specific methyltransferase BabI</fullName>
    </alternativeName>
    <alternativeName>
        <fullName evidence="4">Probable type II methyltransferase M.BabS19ORF4800P</fullName>
        <shortName evidence="4">M.BabS19ORF4800P</shortName>
    </alternativeName>
</protein>
<proteinExistence type="inferred from homology"/>
<feature type="chain" id="PRO_0000363188" description="DNA methyltransferase CcrM">
    <location>
        <begin position="1"/>
        <end position="386"/>
    </location>
</feature>
<feature type="domain" description="RAMA" evidence="3">
    <location>
        <begin position="280"/>
        <end position="382"/>
    </location>
</feature>
<reference key="1">
    <citation type="journal article" date="2008" name="PLoS ONE">
        <title>Genome sequence of Brucella abortus vaccine strain S19 compared to virulent strains yields candidate virulence genes.</title>
        <authorList>
            <person name="Crasta O.R."/>
            <person name="Folkerts O."/>
            <person name="Fei Z."/>
            <person name="Mane S.P."/>
            <person name="Evans C."/>
            <person name="Martino-Catt S."/>
            <person name="Bricker B."/>
            <person name="Yu G."/>
            <person name="Du L."/>
            <person name="Sobral B.W."/>
        </authorList>
    </citation>
    <scope>NUCLEOTIDE SEQUENCE [LARGE SCALE GENOMIC DNA]</scope>
    <source>
        <strain>S19</strain>
    </source>
</reference>
<reference key="2">
    <citation type="journal article" date="2003" name="Nucleic Acids Res.">
        <title>A nomenclature for restriction enzymes, DNA methyltransferases, homing endonucleases and their genes.</title>
        <authorList>
            <person name="Roberts R.J."/>
            <person name="Belfort M."/>
            <person name="Bestor T."/>
            <person name="Bhagwat A.S."/>
            <person name="Bickle T.A."/>
            <person name="Bitinaite J."/>
            <person name="Blumenthal R.M."/>
            <person name="Degtyarev S.K."/>
            <person name="Dryden D.T."/>
            <person name="Dybvig K."/>
            <person name="Firman K."/>
            <person name="Gromova E.S."/>
            <person name="Gumport R.I."/>
            <person name="Halford S.E."/>
            <person name="Hattman S."/>
            <person name="Heitman J."/>
            <person name="Hornby D.P."/>
            <person name="Janulaitis A."/>
            <person name="Jeltsch A."/>
            <person name="Josephsen J."/>
            <person name="Kiss A."/>
            <person name="Klaenhammer T.R."/>
            <person name="Kobayashi I."/>
            <person name="Kong H."/>
            <person name="Krueger D.H."/>
            <person name="Lacks S."/>
            <person name="Marinus M.G."/>
            <person name="Miyahara M."/>
            <person name="Morgan R.D."/>
            <person name="Murray N.E."/>
            <person name="Nagaraja V."/>
            <person name="Piekarowicz A."/>
            <person name="Pingoud A."/>
            <person name="Raleigh E."/>
            <person name="Rao D.N."/>
            <person name="Reich N."/>
            <person name="Repin V.E."/>
            <person name="Selker E.U."/>
            <person name="Shaw P.C."/>
            <person name="Stein D.C."/>
            <person name="Stoddard B.L."/>
            <person name="Szybalski W."/>
            <person name="Trautner T.A."/>
            <person name="Van Etten J.L."/>
            <person name="Vitor J.M."/>
            <person name="Wilson G.G."/>
            <person name="Xu S.Y."/>
        </authorList>
    </citation>
    <scope>NOMENCLATURE</scope>
    <scope>SUBTYPE</scope>
</reference>
<organism>
    <name type="scientific">Brucella abortus (strain S19)</name>
    <dbReference type="NCBI Taxonomy" id="430066"/>
    <lineage>
        <taxon>Bacteria</taxon>
        <taxon>Pseudomonadati</taxon>
        <taxon>Pseudomonadota</taxon>
        <taxon>Alphaproteobacteria</taxon>
        <taxon>Hyphomicrobiales</taxon>
        <taxon>Brucellaceae</taxon>
        <taxon>Brucella/Ochrobactrum group</taxon>
        <taxon>Brucella</taxon>
    </lineage>
</organism>
<comment type="function">
    <text evidence="1 2 4">A beta subtype methylase that recognizes the double-stranded sequence 5'-GANTC-3' and methylates A-2 on both strands (By similarity) (PubMed:12654995). CcrM-mediated methylation has important cellular functions. Contributes to the accurate cell-cycle control of DNA replication and cellular morphology (By similarity).</text>
</comment>
<comment type="catalytic activity">
    <reaction>
        <text>a 2'-deoxyadenosine in DNA + S-adenosyl-L-methionine = an N(6)-methyl-2'-deoxyadenosine in DNA + S-adenosyl-L-homocysteine + H(+)</text>
        <dbReference type="Rhea" id="RHEA:15197"/>
        <dbReference type="Rhea" id="RHEA-COMP:12418"/>
        <dbReference type="Rhea" id="RHEA-COMP:12419"/>
        <dbReference type="ChEBI" id="CHEBI:15378"/>
        <dbReference type="ChEBI" id="CHEBI:57856"/>
        <dbReference type="ChEBI" id="CHEBI:59789"/>
        <dbReference type="ChEBI" id="CHEBI:90615"/>
        <dbReference type="ChEBI" id="CHEBI:90616"/>
        <dbReference type="EC" id="2.1.1.72"/>
    </reaction>
</comment>
<comment type="similarity">
    <text evidence="5">Belongs to the N(4)/N(6)-methyltransferase family.</text>
</comment>